<name>TPIS_PYRWO</name>
<sequence>MAKLKEPIIAINFKTYIEATGKRALEIAKAAEKVYKETGVTIVVAPQLVDLRMIAESVEIPVFAQHIDPIKPGSHTGHVLPEAVKEAGAVGTLLNHSENRMILADLEAAIRRAEEVGLMTMVCSNNPAVSAAVAALNPDYVAVEPPELIGTGIPVSKAKPEVITNTVELVKKVNPEVKVLCGAGISTGEDVKKAIELGTVGVLLASGVTKAKDPEKAIWDLVSGIIKE</sequence>
<proteinExistence type="evidence at protein level"/>
<keyword id="KW-0002">3D-structure</keyword>
<keyword id="KW-0963">Cytoplasm</keyword>
<keyword id="KW-0903">Direct protein sequencing</keyword>
<keyword id="KW-0312">Gluconeogenesis</keyword>
<keyword id="KW-0324">Glycolysis</keyword>
<keyword id="KW-0413">Isomerase</keyword>
<organism>
    <name type="scientific">Pyrococcus woesei</name>
    <dbReference type="NCBI Taxonomy" id="2262"/>
    <lineage>
        <taxon>Archaea</taxon>
        <taxon>Methanobacteriati</taxon>
        <taxon>Methanobacteriota</taxon>
        <taxon>Thermococci</taxon>
        <taxon>Thermococcales</taxon>
        <taxon>Thermococcaceae</taxon>
        <taxon>Pyrococcus</taxon>
    </lineage>
</organism>
<gene>
    <name evidence="1" type="primary">tpiA</name>
    <name type="synonym">tpi</name>
</gene>
<feature type="initiator methionine" description="Removed" evidence="3">
    <location>
        <position position="1"/>
    </location>
</feature>
<feature type="chain" id="PRO_0000090344" description="Triosephosphate isomerase">
    <location>
        <begin position="2"/>
        <end position="228"/>
    </location>
</feature>
<feature type="active site" description="Electrophile" evidence="1">
    <location>
        <position position="96"/>
    </location>
</feature>
<feature type="active site" description="Proton acceptor" evidence="1">
    <location>
        <position position="144"/>
    </location>
</feature>
<feature type="binding site" evidence="1 2">
    <location>
        <begin position="12"/>
        <end position="14"/>
    </location>
    <ligand>
        <name>substrate</name>
    </ligand>
</feature>
<feature type="binding site" evidence="1 2">
    <location>
        <position position="149"/>
    </location>
    <ligand>
        <name>substrate</name>
    </ligand>
</feature>
<feature type="binding site" evidence="1">
    <location>
        <position position="184"/>
    </location>
    <ligand>
        <name>substrate</name>
    </ligand>
</feature>
<feature type="binding site" evidence="1 2">
    <location>
        <begin position="205"/>
        <end position="206"/>
    </location>
    <ligand>
        <name>substrate</name>
    </ligand>
</feature>
<feature type="strand" evidence="5">
    <location>
        <begin position="6"/>
        <end position="12"/>
    </location>
</feature>
<feature type="helix" evidence="5">
    <location>
        <begin position="17"/>
        <end position="19"/>
    </location>
</feature>
<feature type="helix" evidence="5">
    <location>
        <begin position="21"/>
        <end position="36"/>
    </location>
</feature>
<feature type="strand" evidence="5">
    <location>
        <begin position="41"/>
        <end position="45"/>
    </location>
</feature>
<feature type="helix" evidence="5">
    <location>
        <begin position="48"/>
        <end position="56"/>
    </location>
</feature>
<feature type="strand" evidence="5">
    <location>
        <begin position="62"/>
        <end position="65"/>
    </location>
</feature>
<feature type="strand" evidence="5">
    <location>
        <begin position="72"/>
        <end position="74"/>
    </location>
</feature>
<feature type="helix" evidence="5">
    <location>
        <begin position="81"/>
        <end position="86"/>
    </location>
</feature>
<feature type="strand" evidence="5">
    <location>
        <begin position="91"/>
        <end position="95"/>
    </location>
</feature>
<feature type="helix" evidence="5">
    <location>
        <begin position="97"/>
        <end position="99"/>
    </location>
</feature>
<feature type="helix" evidence="5">
    <location>
        <begin position="103"/>
        <end position="116"/>
    </location>
</feature>
<feature type="strand" evidence="5">
    <location>
        <begin position="119"/>
        <end position="126"/>
    </location>
</feature>
<feature type="helix" evidence="5">
    <location>
        <begin position="127"/>
        <end position="134"/>
    </location>
</feature>
<feature type="strand" evidence="5">
    <location>
        <begin position="139"/>
        <end position="143"/>
    </location>
</feature>
<feature type="turn" evidence="5">
    <location>
        <begin position="146"/>
        <end position="151"/>
    </location>
</feature>
<feature type="turn" evidence="5">
    <location>
        <begin position="155"/>
        <end position="157"/>
    </location>
</feature>
<feature type="helix" evidence="5">
    <location>
        <begin position="161"/>
        <end position="173"/>
    </location>
</feature>
<feature type="strand" evidence="5">
    <location>
        <begin position="177"/>
        <end position="184"/>
    </location>
</feature>
<feature type="helix" evidence="5">
    <location>
        <begin position="188"/>
        <end position="196"/>
    </location>
</feature>
<feature type="strand" evidence="5">
    <location>
        <begin position="200"/>
        <end position="205"/>
    </location>
</feature>
<feature type="helix" evidence="5">
    <location>
        <begin position="206"/>
        <end position="209"/>
    </location>
</feature>
<feature type="helix" evidence="5">
    <location>
        <begin position="214"/>
        <end position="223"/>
    </location>
</feature>
<protein>
    <recommendedName>
        <fullName evidence="1 4">Triosephosphate isomerase</fullName>
        <shortName evidence="1 4">TIM</shortName>
        <shortName evidence="1">TPI</shortName>
        <ecNumber evidence="1">5.3.1.1</ecNumber>
    </recommendedName>
    <alternativeName>
        <fullName evidence="1">Triose-phosphate isomerase</fullName>
    </alternativeName>
</protein>
<evidence type="ECO:0000255" key="1">
    <source>
        <dbReference type="HAMAP-Rule" id="MF_00147"/>
    </source>
</evidence>
<evidence type="ECO:0000269" key="2">
    <source>
    </source>
</evidence>
<evidence type="ECO:0000269" key="3">
    <source>
    </source>
</evidence>
<evidence type="ECO:0000303" key="4">
    <source>
    </source>
</evidence>
<evidence type="ECO:0007829" key="5">
    <source>
        <dbReference type="PDB" id="1HG3"/>
    </source>
</evidence>
<reference key="1">
    <citation type="journal article" date="1996" name="FEBS Lett.">
        <title>Tetrameric triosephosphate isomerase from hyperthermophilic Archaea.</title>
        <authorList>
            <person name="Kohlhoff M."/>
            <person name="Dahm A."/>
            <person name="Hensel R."/>
        </authorList>
    </citation>
    <scope>NUCLEOTIDE SEQUENCE [GENOMIC DNA]</scope>
    <scope>PROTEIN SEQUENCE OF 2-29</scope>
    <scope>BIOPHYSICOCHEMICAL PROPERTIES</scope>
    <scope>SUBUNIT</scope>
    <source>
        <strain>ATCC 49860 / DSM 3773 / JCM 8421 / Vul4</strain>
    </source>
</reference>
<reference key="2">
    <citation type="submission" date="2001-01" db="EMBL/GenBank/DDBJ databases">
        <authorList>
            <person name="Schramm A."/>
        </authorList>
    </citation>
    <scope>SEQUENCE REVISION TO 211-228</scope>
</reference>
<reference key="3">
    <citation type="journal article" date="2001" name="J. Mol. Biol.">
        <title>Tiny TIM: a small, tetrameric, hyperthermostable triosephosphate isomerase.</title>
        <authorList>
            <person name="Walden H."/>
            <person name="Bell G.S."/>
            <person name="Russell R.J."/>
            <person name="Siebers B."/>
            <person name="Hensel R."/>
            <person name="Taylor G.L."/>
        </authorList>
    </citation>
    <scope>X-RAY CRYSTALLOGRAPHY (2.7 ANGSTROMS) IN COMPLEX WITH SUBSTRATE ANALOG</scope>
    <scope>SUBUNIT</scope>
</reference>
<comment type="function">
    <text evidence="1">Involved in the gluconeogenesis. Catalyzes stereospecifically the conversion of dihydroxyacetone phosphate (DHAP) to D-glyceraldehyde-3-phosphate (G3P).</text>
</comment>
<comment type="catalytic activity">
    <reaction evidence="1">
        <text>D-glyceraldehyde 3-phosphate = dihydroxyacetone phosphate</text>
        <dbReference type="Rhea" id="RHEA:18585"/>
        <dbReference type="ChEBI" id="CHEBI:57642"/>
        <dbReference type="ChEBI" id="CHEBI:59776"/>
        <dbReference type="EC" id="5.3.1.1"/>
    </reaction>
</comment>
<comment type="biophysicochemical properties">
    <temperatureDependence>
        <text evidence="3">Thermostable. The formation of the dimer of dimers is important to increase the thermostability.</text>
    </temperatureDependence>
</comment>
<comment type="pathway">
    <text evidence="1">Carbohydrate biosynthesis; gluconeogenesis.</text>
</comment>
<comment type="pathway">
    <text evidence="1">Carbohydrate degradation; glycolysis; D-glyceraldehyde 3-phosphate from glycerone phosphate: step 1/1.</text>
</comment>
<comment type="subunit">
    <text evidence="1 2 3">Homotetramer; dimer of dimers.</text>
</comment>
<comment type="subcellular location">
    <subcellularLocation>
        <location evidence="1">Cytoplasm</location>
    </subcellularLocation>
</comment>
<comment type="similarity">
    <text evidence="1">Belongs to the triosephosphate isomerase family.</text>
</comment>
<accession>P62003</accession>
<accession>P95583</accession>
<dbReference type="EC" id="5.3.1.1" evidence="1"/>
<dbReference type="EMBL" id="Y09481">
    <property type="protein sequence ID" value="CAA70690.2"/>
    <property type="molecule type" value="Genomic_DNA"/>
</dbReference>
<dbReference type="PIR" id="S66212">
    <property type="entry name" value="S66212"/>
</dbReference>
<dbReference type="PDB" id="1HG3">
    <property type="method" value="X-ray"/>
    <property type="resolution" value="2.70 A"/>
    <property type="chains" value="A/B/C/D/E/F/G/H=1-225"/>
</dbReference>
<dbReference type="PDBsum" id="1HG3"/>
<dbReference type="SMR" id="P62003"/>
<dbReference type="BioCyc" id="MetaCyc:MONOMER-11811"/>
<dbReference type="BRENDA" id="5.3.1.1">
    <property type="organism ID" value="5249"/>
</dbReference>
<dbReference type="UniPathway" id="UPA00109">
    <property type="reaction ID" value="UER00189"/>
</dbReference>
<dbReference type="UniPathway" id="UPA00138"/>
<dbReference type="EvolutionaryTrace" id="P62003"/>
<dbReference type="GO" id="GO:0005829">
    <property type="term" value="C:cytosol"/>
    <property type="evidence" value="ECO:0007669"/>
    <property type="project" value="TreeGrafter"/>
</dbReference>
<dbReference type="GO" id="GO:0004807">
    <property type="term" value="F:triose-phosphate isomerase activity"/>
    <property type="evidence" value="ECO:0007669"/>
    <property type="project" value="UniProtKB-UniRule"/>
</dbReference>
<dbReference type="GO" id="GO:0006094">
    <property type="term" value="P:gluconeogenesis"/>
    <property type="evidence" value="ECO:0007669"/>
    <property type="project" value="UniProtKB-UniRule"/>
</dbReference>
<dbReference type="GO" id="GO:0046166">
    <property type="term" value="P:glyceraldehyde-3-phosphate biosynthetic process"/>
    <property type="evidence" value="ECO:0007669"/>
    <property type="project" value="TreeGrafter"/>
</dbReference>
<dbReference type="GO" id="GO:0019563">
    <property type="term" value="P:glycerol catabolic process"/>
    <property type="evidence" value="ECO:0007669"/>
    <property type="project" value="TreeGrafter"/>
</dbReference>
<dbReference type="GO" id="GO:0006096">
    <property type="term" value="P:glycolytic process"/>
    <property type="evidence" value="ECO:0007669"/>
    <property type="project" value="UniProtKB-UniRule"/>
</dbReference>
<dbReference type="CDD" id="cd00311">
    <property type="entry name" value="TIM"/>
    <property type="match status" value="1"/>
</dbReference>
<dbReference type="FunFam" id="3.20.20.70:FF:000223">
    <property type="entry name" value="Triosephosphate isomerase"/>
    <property type="match status" value="1"/>
</dbReference>
<dbReference type="Gene3D" id="3.20.20.70">
    <property type="entry name" value="Aldolase class I"/>
    <property type="match status" value="1"/>
</dbReference>
<dbReference type="HAMAP" id="MF_00147_A">
    <property type="entry name" value="TIM_A"/>
    <property type="match status" value="1"/>
</dbReference>
<dbReference type="InterPro" id="IPR013785">
    <property type="entry name" value="Aldolase_TIM"/>
</dbReference>
<dbReference type="InterPro" id="IPR035990">
    <property type="entry name" value="TIM_sf"/>
</dbReference>
<dbReference type="InterPro" id="IPR000652">
    <property type="entry name" value="Triosephosphate_isomerase"/>
</dbReference>
<dbReference type="InterPro" id="IPR022891">
    <property type="entry name" value="Triosephosphate_isomerase_arc"/>
</dbReference>
<dbReference type="InterPro" id="IPR020861">
    <property type="entry name" value="Triosephosphate_isomerase_AS"/>
</dbReference>
<dbReference type="NCBIfam" id="NF003302">
    <property type="entry name" value="PRK04302.1"/>
    <property type="match status" value="1"/>
</dbReference>
<dbReference type="NCBIfam" id="TIGR00419">
    <property type="entry name" value="tim"/>
    <property type="match status" value="1"/>
</dbReference>
<dbReference type="PANTHER" id="PTHR21139">
    <property type="entry name" value="TRIOSEPHOSPHATE ISOMERASE"/>
    <property type="match status" value="1"/>
</dbReference>
<dbReference type="PANTHER" id="PTHR21139:SF42">
    <property type="entry name" value="TRIOSEPHOSPHATE ISOMERASE"/>
    <property type="match status" value="1"/>
</dbReference>
<dbReference type="Pfam" id="PF00121">
    <property type="entry name" value="TIM"/>
    <property type="match status" value="1"/>
</dbReference>
<dbReference type="SUPFAM" id="SSF51351">
    <property type="entry name" value="Triosephosphate isomerase (TIM)"/>
    <property type="match status" value="1"/>
</dbReference>
<dbReference type="PROSITE" id="PS00171">
    <property type="entry name" value="TIM_1"/>
    <property type="match status" value="1"/>
</dbReference>
<dbReference type="PROSITE" id="PS51440">
    <property type="entry name" value="TIM_2"/>
    <property type="match status" value="1"/>
</dbReference>